<accession>Q12F46</accession>
<feature type="chain" id="PRO_1000049534" description="Glycerol-3-phosphate dehydrogenase [NAD(P)+]">
    <location>
        <begin position="1"/>
        <end position="353"/>
    </location>
</feature>
<feature type="active site" description="Proton acceptor" evidence="1">
    <location>
        <position position="211"/>
    </location>
</feature>
<feature type="binding site" evidence="1">
    <location>
        <position position="11"/>
    </location>
    <ligand>
        <name>NADPH</name>
        <dbReference type="ChEBI" id="CHEBI:57783"/>
    </ligand>
</feature>
<feature type="binding site" evidence="1">
    <location>
        <position position="40"/>
    </location>
    <ligand>
        <name>NADPH</name>
        <dbReference type="ChEBI" id="CHEBI:57783"/>
    </ligand>
</feature>
<feature type="binding site" evidence="1">
    <location>
        <position position="115"/>
    </location>
    <ligand>
        <name>NADPH</name>
        <dbReference type="ChEBI" id="CHEBI:57783"/>
    </ligand>
</feature>
<feature type="binding site" evidence="1">
    <location>
        <position position="115"/>
    </location>
    <ligand>
        <name>sn-glycerol 3-phosphate</name>
        <dbReference type="ChEBI" id="CHEBI:57597"/>
    </ligand>
</feature>
<feature type="binding site" evidence="1">
    <location>
        <position position="156"/>
    </location>
    <ligand>
        <name>sn-glycerol 3-phosphate</name>
        <dbReference type="ChEBI" id="CHEBI:57597"/>
    </ligand>
</feature>
<feature type="binding site" evidence="1">
    <location>
        <position position="158"/>
    </location>
    <ligand>
        <name>sn-glycerol 3-phosphate</name>
        <dbReference type="ChEBI" id="CHEBI:57597"/>
    </ligand>
</feature>
<feature type="binding site" evidence="1">
    <location>
        <position position="160"/>
    </location>
    <ligand>
        <name>NADPH</name>
        <dbReference type="ChEBI" id="CHEBI:57783"/>
    </ligand>
</feature>
<feature type="binding site" evidence="1">
    <location>
        <position position="211"/>
    </location>
    <ligand>
        <name>sn-glycerol 3-phosphate</name>
        <dbReference type="ChEBI" id="CHEBI:57597"/>
    </ligand>
</feature>
<feature type="binding site" evidence="1">
    <location>
        <position position="264"/>
    </location>
    <ligand>
        <name>sn-glycerol 3-phosphate</name>
        <dbReference type="ChEBI" id="CHEBI:57597"/>
    </ligand>
</feature>
<feature type="binding site" evidence="1">
    <location>
        <position position="274"/>
    </location>
    <ligand>
        <name>sn-glycerol 3-phosphate</name>
        <dbReference type="ChEBI" id="CHEBI:57597"/>
    </ligand>
</feature>
<feature type="binding site" evidence="1">
    <location>
        <position position="275"/>
    </location>
    <ligand>
        <name>NADPH</name>
        <dbReference type="ChEBI" id="CHEBI:57783"/>
    </ligand>
</feature>
<feature type="binding site" evidence="1">
    <location>
        <position position="275"/>
    </location>
    <ligand>
        <name>sn-glycerol 3-phosphate</name>
        <dbReference type="ChEBI" id="CHEBI:57597"/>
    </ligand>
</feature>
<feature type="binding site" evidence="1">
    <location>
        <position position="276"/>
    </location>
    <ligand>
        <name>sn-glycerol 3-phosphate</name>
        <dbReference type="ChEBI" id="CHEBI:57597"/>
    </ligand>
</feature>
<feature type="binding site" evidence="1">
    <location>
        <position position="299"/>
    </location>
    <ligand>
        <name>NADPH</name>
        <dbReference type="ChEBI" id="CHEBI:57783"/>
    </ligand>
</feature>
<feature type="binding site" evidence="1">
    <location>
        <position position="301"/>
    </location>
    <ligand>
        <name>NADPH</name>
        <dbReference type="ChEBI" id="CHEBI:57783"/>
    </ligand>
</feature>
<gene>
    <name evidence="1" type="primary">gpsA</name>
    <name type="ordered locus">Bpro_0890</name>
</gene>
<proteinExistence type="inferred from homology"/>
<reference key="1">
    <citation type="journal article" date="2008" name="Appl. Environ. Microbiol.">
        <title>The genome of Polaromonas sp. strain JS666: insights into the evolution of a hydrocarbon- and xenobiotic-degrading bacterium, and features of relevance to biotechnology.</title>
        <authorList>
            <person name="Mattes T.E."/>
            <person name="Alexander A.K."/>
            <person name="Richardson P.M."/>
            <person name="Munk A.C."/>
            <person name="Han C.S."/>
            <person name="Stothard P."/>
            <person name="Coleman N.V."/>
        </authorList>
    </citation>
    <scope>NUCLEOTIDE SEQUENCE [LARGE SCALE GENOMIC DNA]</scope>
    <source>
        <strain>JS666 / ATCC BAA-500</strain>
    </source>
</reference>
<keyword id="KW-0963">Cytoplasm</keyword>
<keyword id="KW-0444">Lipid biosynthesis</keyword>
<keyword id="KW-0443">Lipid metabolism</keyword>
<keyword id="KW-0520">NAD</keyword>
<keyword id="KW-0521">NADP</keyword>
<keyword id="KW-0547">Nucleotide-binding</keyword>
<keyword id="KW-0560">Oxidoreductase</keyword>
<keyword id="KW-0594">Phospholipid biosynthesis</keyword>
<keyword id="KW-1208">Phospholipid metabolism</keyword>
<keyword id="KW-1185">Reference proteome</keyword>
<name>GPDA_POLSJ</name>
<organism>
    <name type="scientific">Polaromonas sp. (strain JS666 / ATCC BAA-500)</name>
    <dbReference type="NCBI Taxonomy" id="296591"/>
    <lineage>
        <taxon>Bacteria</taxon>
        <taxon>Pseudomonadati</taxon>
        <taxon>Pseudomonadota</taxon>
        <taxon>Betaproteobacteria</taxon>
        <taxon>Burkholderiales</taxon>
        <taxon>Comamonadaceae</taxon>
        <taxon>Polaromonas</taxon>
    </lineage>
</organism>
<evidence type="ECO:0000255" key="1">
    <source>
        <dbReference type="HAMAP-Rule" id="MF_00394"/>
    </source>
</evidence>
<comment type="function">
    <text evidence="1">Catalyzes the reduction of the glycolytic intermediate dihydroxyacetone phosphate (DHAP) to sn-glycerol 3-phosphate (G3P), the key precursor for phospholipid synthesis.</text>
</comment>
<comment type="catalytic activity">
    <reaction evidence="1">
        <text>sn-glycerol 3-phosphate + NAD(+) = dihydroxyacetone phosphate + NADH + H(+)</text>
        <dbReference type="Rhea" id="RHEA:11092"/>
        <dbReference type="ChEBI" id="CHEBI:15378"/>
        <dbReference type="ChEBI" id="CHEBI:57540"/>
        <dbReference type="ChEBI" id="CHEBI:57597"/>
        <dbReference type="ChEBI" id="CHEBI:57642"/>
        <dbReference type="ChEBI" id="CHEBI:57945"/>
        <dbReference type="EC" id="1.1.1.94"/>
    </reaction>
    <physiologicalReaction direction="right-to-left" evidence="1">
        <dbReference type="Rhea" id="RHEA:11094"/>
    </physiologicalReaction>
</comment>
<comment type="catalytic activity">
    <reaction evidence="1">
        <text>sn-glycerol 3-phosphate + NADP(+) = dihydroxyacetone phosphate + NADPH + H(+)</text>
        <dbReference type="Rhea" id="RHEA:11096"/>
        <dbReference type="ChEBI" id="CHEBI:15378"/>
        <dbReference type="ChEBI" id="CHEBI:57597"/>
        <dbReference type="ChEBI" id="CHEBI:57642"/>
        <dbReference type="ChEBI" id="CHEBI:57783"/>
        <dbReference type="ChEBI" id="CHEBI:58349"/>
        <dbReference type="EC" id="1.1.1.94"/>
    </reaction>
    <physiologicalReaction direction="right-to-left" evidence="1">
        <dbReference type="Rhea" id="RHEA:11098"/>
    </physiologicalReaction>
</comment>
<comment type="pathway">
    <text evidence="1">Membrane lipid metabolism; glycerophospholipid metabolism.</text>
</comment>
<comment type="subcellular location">
    <subcellularLocation>
        <location evidence="1">Cytoplasm</location>
    </subcellularLocation>
</comment>
<comment type="similarity">
    <text evidence="1">Belongs to the NAD-dependent glycerol-3-phosphate dehydrogenase family.</text>
</comment>
<dbReference type="EC" id="1.1.1.94" evidence="1"/>
<dbReference type="EMBL" id="CP000316">
    <property type="protein sequence ID" value="ABE42846.1"/>
    <property type="molecule type" value="Genomic_DNA"/>
</dbReference>
<dbReference type="RefSeq" id="WP_011481848.1">
    <property type="nucleotide sequence ID" value="NC_007948.1"/>
</dbReference>
<dbReference type="SMR" id="Q12F46"/>
<dbReference type="STRING" id="296591.Bpro_0890"/>
<dbReference type="KEGG" id="pol:Bpro_0890"/>
<dbReference type="eggNOG" id="COG0240">
    <property type="taxonomic scope" value="Bacteria"/>
</dbReference>
<dbReference type="HOGENOM" id="CLU_033449_0_2_4"/>
<dbReference type="OrthoDB" id="9812273at2"/>
<dbReference type="UniPathway" id="UPA00940"/>
<dbReference type="Proteomes" id="UP000001983">
    <property type="component" value="Chromosome"/>
</dbReference>
<dbReference type="GO" id="GO:0005829">
    <property type="term" value="C:cytosol"/>
    <property type="evidence" value="ECO:0007669"/>
    <property type="project" value="TreeGrafter"/>
</dbReference>
<dbReference type="GO" id="GO:0047952">
    <property type="term" value="F:glycerol-3-phosphate dehydrogenase [NAD(P)+] activity"/>
    <property type="evidence" value="ECO:0007669"/>
    <property type="project" value="UniProtKB-UniRule"/>
</dbReference>
<dbReference type="GO" id="GO:0051287">
    <property type="term" value="F:NAD binding"/>
    <property type="evidence" value="ECO:0007669"/>
    <property type="project" value="InterPro"/>
</dbReference>
<dbReference type="GO" id="GO:0005975">
    <property type="term" value="P:carbohydrate metabolic process"/>
    <property type="evidence" value="ECO:0007669"/>
    <property type="project" value="InterPro"/>
</dbReference>
<dbReference type="GO" id="GO:0046167">
    <property type="term" value="P:glycerol-3-phosphate biosynthetic process"/>
    <property type="evidence" value="ECO:0007669"/>
    <property type="project" value="UniProtKB-UniRule"/>
</dbReference>
<dbReference type="GO" id="GO:0046168">
    <property type="term" value="P:glycerol-3-phosphate catabolic process"/>
    <property type="evidence" value="ECO:0007669"/>
    <property type="project" value="InterPro"/>
</dbReference>
<dbReference type="GO" id="GO:0006650">
    <property type="term" value="P:glycerophospholipid metabolic process"/>
    <property type="evidence" value="ECO:0007669"/>
    <property type="project" value="UniProtKB-UniRule"/>
</dbReference>
<dbReference type="GO" id="GO:0008654">
    <property type="term" value="P:phospholipid biosynthetic process"/>
    <property type="evidence" value="ECO:0007669"/>
    <property type="project" value="UniProtKB-KW"/>
</dbReference>
<dbReference type="FunFam" id="1.10.1040.10:FF:000001">
    <property type="entry name" value="Glycerol-3-phosphate dehydrogenase [NAD(P)+]"/>
    <property type="match status" value="1"/>
</dbReference>
<dbReference type="Gene3D" id="1.10.1040.10">
    <property type="entry name" value="N-(1-d-carboxylethyl)-l-norvaline Dehydrogenase, domain 2"/>
    <property type="match status" value="1"/>
</dbReference>
<dbReference type="Gene3D" id="3.40.50.720">
    <property type="entry name" value="NAD(P)-binding Rossmann-like Domain"/>
    <property type="match status" value="1"/>
</dbReference>
<dbReference type="HAMAP" id="MF_00394">
    <property type="entry name" value="NAD_Glyc3P_dehydrog"/>
    <property type="match status" value="1"/>
</dbReference>
<dbReference type="InterPro" id="IPR008927">
    <property type="entry name" value="6-PGluconate_DH-like_C_sf"/>
</dbReference>
<dbReference type="InterPro" id="IPR013328">
    <property type="entry name" value="6PGD_dom2"/>
</dbReference>
<dbReference type="InterPro" id="IPR006168">
    <property type="entry name" value="G3P_DH_NAD-dep"/>
</dbReference>
<dbReference type="InterPro" id="IPR006109">
    <property type="entry name" value="G3P_DH_NAD-dep_C"/>
</dbReference>
<dbReference type="InterPro" id="IPR011128">
    <property type="entry name" value="G3P_DH_NAD-dep_N"/>
</dbReference>
<dbReference type="InterPro" id="IPR036291">
    <property type="entry name" value="NAD(P)-bd_dom_sf"/>
</dbReference>
<dbReference type="NCBIfam" id="NF000940">
    <property type="entry name" value="PRK00094.1-2"/>
    <property type="match status" value="1"/>
</dbReference>
<dbReference type="NCBIfam" id="NF000942">
    <property type="entry name" value="PRK00094.1-4"/>
    <property type="match status" value="1"/>
</dbReference>
<dbReference type="PANTHER" id="PTHR11728">
    <property type="entry name" value="GLYCEROL-3-PHOSPHATE DEHYDROGENASE"/>
    <property type="match status" value="1"/>
</dbReference>
<dbReference type="PANTHER" id="PTHR11728:SF1">
    <property type="entry name" value="GLYCEROL-3-PHOSPHATE DEHYDROGENASE [NAD(+)] 2, CHLOROPLASTIC"/>
    <property type="match status" value="1"/>
</dbReference>
<dbReference type="Pfam" id="PF07479">
    <property type="entry name" value="NAD_Gly3P_dh_C"/>
    <property type="match status" value="1"/>
</dbReference>
<dbReference type="Pfam" id="PF01210">
    <property type="entry name" value="NAD_Gly3P_dh_N"/>
    <property type="match status" value="1"/>
</dbReference>
<dbReference type="PIRSF" id="PIRSF000114">
    <property type="entry name" value="Glycerol-3-P_dh"/>
    <property type="match status" value="1"/>
</dbReference>
<dbReference type="PRINTS" id="PR00077">
    <property type="entry name" value="GPDHDRGNASE"/>
</dbReference>
<dbReference type="SUPFAM" id="SSF48179">
    <property type="entry name" value="6-phosphogluconate dehydrogenase C-terminal domain-like"/>
    <property type="match status" value="1"/>
</dbReference>
<dbReference type="SUPFAM" id="SSF51735">
    <property type="entry name" value="NAD(P)-binding Rossmann-fold domains"/>
    <property type="match status" value="1"/>
</dbReference>
<dbReference type="PROSITE" id="PS00957">
    <property type="entry name" value="NAD_G3PDH"/>
    <property type="match status" value="1"/>
</dbReference>
<protein>
    <recommendedName>
        <fullName evidence="1">Glycerol-3-phosphate dehydrogenase [NAD(P)+]</fullName>
        <ecNumber evidence="1">1.1.1.94</ecNumber>
    </recommendedName>
    <alternativeName>
        <fullName evidence="1">NAD(P)(+)-dependent glycerol-3-phosphate dehydrogenase</fullName>
    </alternativeName>
    <alternativeName>
        <fullName evidence="1">NAD(P)H-dependent dihydroxyacetone-phosphate reductase</fullName>
    </alternativeName>
</protein>
<sequence>MKIVVIGAGAWGTALAVNTAGAVEAAGSDAPRHQVTLWARDAALVKAMQAERANTRYLPGVALPGNLLLQGGGETSLAEAVSGQDLIILATPVSAARGLLQSLQQASVPVVWLSKGFEAPVAAVPHSAPSLASFGLMVHEIRAQVATDLRAGILSGPSFALEVARGQPTALVAASEHAEVRDALVAAFHGTSLRIYASDDIVGVEVGGAVKNVLAIATGLCDGLQLGLNARAALITRGLAEMTRLGVTLGARAETFTGLSGLGDLVLTATGDLSRNRKVGLQLAQGKTLAEAVKSLGHVAEGVYCARTVVQRAAGLGVDMPIAQSVVALLDGKLRPAEAVAALMGRGPTTELA</sequence>